<organism>
    <name type="scientific">Nostoc sp. (strain PCC 7120 / SAG 25.82 / UTEX 2576)</name>
    <dbReference type="NCBI Taxonomy" id="103690"/>
    <lineage>
        <taxon>Bacteria</taxon>
        <taxon>Bacillati</taxon>
        <taxon>Cyanobacteriota</taxon>
        <taxon>Cyanophyceae</taxon>
        <taxon>Nostocales</taxon>
        <taxon>Nostocaceae</taxon>
        <taxon>Nostoc</taxon>
    </lineage>
</organism>
<proteinExistence type="evidence at protein level"/>
<protein>
    <recommendedName>
        <fullName>Linolenate 9R-lipoxygenase</fullName>
        <ecNumber>1.13.11.61</ecNumber>
    </recommendedName>
    <alternativeName>
        <fullName>NspLOX</fullName>
    </alternativeName>
</protein>
<accession>Q8YK97</accession>
<comment type="function">
    <text evidence="2">Catalyzes the conversion of alpha-linoleate to (9R,10E,12Z,15Z)-9-hydroperoxyoctadeca-10,12,15-trienoate in oxylipin biosynthesis. Also converts alpha-linoleate to (9R,10E,12Z)-9-hydroperoxyoctadeca-10,12-dienoate.</text>
</comment>
<comment type="catalytic activity">
    <reaction evidence="2">
        <text>(9Z,12Z,15Z)-octadecatrienoate + O2 = (9R,10E,12Z,15Z)-9-hydroperoxyoctadeca-10,12,15-trienoate</text>
        <dbReference type="Rhea" id="RHEA:31687"/>
        <dbReference type="ChEBI" id="CHEBI:15379"/>
        <dbReference type="ChEBI" id="CHEBI:32387"/>
        <dbReference type="ChEBI" id="CHEBI:63241"/>
        <dbReference type="EC" id="1.13.11.61"/>
    </reaction>
</comment>
<comment type="biophysicochemical properties">
    <phDependence>
        <text evidence="2">Optimum pH is 7-10.</text>
    </phDependence>
</comment>
<comment type="pathway">
    <text evidence="1 2">Lipid metabolism; oxylipin biosynthesis.</text>
</comment>
<comment type="similarity">
    <text evidence="3">Belongs to the lipoxygenase family.</text>
</comment>
<evidence type="ECO:0000255" key="1">
    <source>
        <dbReference type="PROSITE-ProRule" id="PRU00726"/>
    </source>
</evidence>
<evidence type="ECO:0000269" key="2">
    <source>
    </source>
</evidence>
<evidence type="ECO:0000305" key="3"/>
<gene>
    <name type="ordered locus">all8020</name>
</gene>
<dbReference type="EC" id="1.13.11.61"/>
<dbReference type="EMBL" id="AP003603">
    <property type="protein sequence ID" value="BAB77350.1"/>
    <property type="molecule type" value="Genomic_DNA"/>
</dbReference>
<dbReference type="PIR" id="AE2553">
    <property type="entry name" value="AE2553"/>
</dbReference>
<dbReference type="RefSeq" id="WP_010994078.1">
    <property type="nucleotide sequence ID" value="NC_003267.1"/>
</dbReference>
<dbReference type="SMR" id="Q8YK97"/>
<dbReference type="PeroxiBase" id="5629">
    <property type="entry name" value="NOspKatLox01"/>
</dbReference>
<dbReference type="KEGG" id="ana:all8020"/>
<dbReference type="OrthoDB" id="5912511at2"/>
<dbReference type="BioCyc" id="MetaCyc:MONOMER-16943"/>
<dbReference type="BRENDA" id="1.13.11.B1">
    <property type="organism ID" value="4371"/>
</dbReference>
<dbReference type="UniPathway" id="UPA00382"/>
<dbReference type="Proteomes" id="UP000002483">
    <property type="component" value="Plasmid pCC7120gamma"/>
</dbReference>
<dbReference type="GO" id="GO:0020037">
    <property type="term" value="F:heme binding"/>
    <property type="evidence" value="ECO:0007669"/>
    <property type="project" value="InterPro"/>
</dbReference>
<dbReference type="GO" id="GO:0102299">
    <property type="term" value="F:linolenate 9R-lipoxygenase activity"/>
    <property type="evidence" value="ECO:0007669"/>
    <property type="project" value="UniProtKB-EC"/>
</dbReference>
<dbReference type="GO" id="GO:0046872">
    <property type="term" value="F:metal ion binding"/>
    <property type="evidence" value="ECO:0007669"/>
    <property type="project" value="UniProtKB-KW"/>
</dbReference>
<dbReference type="GO" id="GO:0016702">
    <property type="term" value="F:oxidoreductase activity, acting on single donors with incorporation of molecular oxygen, incorporation of two atoms of oxygen"/>
    <property type="evidence" value="ECO:0000314"/>
    <property type="project" value="UniProtKB"/>
</dbReference>
<dbReference type="GO" id="GO:0006633">
    <property type="term" value="P:fatty acid biosynthetic process"/>
    <property type="evidence" value="ECO:0007669"/>
    <property type="project" value="UniProtKB-KW"/>
</dbReference>
<dbReference type="GO" id="GO:0034440">
    <property type="term" value="P:lipid oxidation"/>
    <property type="evidence" value="ECO:0007669"/>
    <property type="project" value="InterPro"/>
</dbReference>
<dbReference type="GO" id="GO:0031408">
    <property type="term" value="P:oxylipin biosynthetic process"/>
    <property type="evidence" value="ECO:0000314"/>
    <property type="project" value="UniProtKB"/>
</dbReference>
<dbReference type="CDD" id="cd08151">
    <property type="entry name" value="AOS"/>
    <property type="match status" value="1"/>
</dbReference>
<dbReference type="Gene3D" id="2.40.180.10">
    <property type="entry name" value="Catalase core domain"/>
    <property type="match status" value="1"/>
</dbReference>
<dbReference type="Gene3D" id="1.20.245.10">
    <property type="entry name" value="Lipoxygenase-1, Domain 5"/>
    <property type="match status" value="1"/>
</dbReference>
<dbReference type="InterPro" id="IPR020835">
    <property type="entry name" value="Catalase_sf"/>
</dbReference>
<dbReference type="InterPro" id="IPR000907">
    <property type="entry name" value="LipOase"/>
</dbReference>
<dbReference type="InterPro" id="IPR013819">
    <property type="entry name" value="LipOase_C"/>
</dbReference>
<dbReference type="InterPro" id="IPR036226">
    <property type="entry name" value="LipOase_C_sf"/>
</dbReference>
<dbReference type="PANTHER" id="PTHR11771">
    <property type="entry name" value="LIPOXYGENASE"/>
    <property type="match status" value="1"/>
</dbReference>
<dbReference type="Pfam" id="PF00305">
    <property type="entry name" value="Lipoxygenase"/>
    <property type="match status" value="1"/>
</dbReference>
<dbReference type="SUPFAM" id="SSF56634">
    <property type="entry name" value="Heme-dependent catalase-like"/>
    <property type="match status" value="1"/>
</dbReference>
<dbReference type="SUPFAM" id="SSF48484">
    <property type="entry name" value="Lipoxigenase"/>
    <property type="match status" value="1"/>
</dbReference>
<dbReference type="PROSITE" id="PS51393">
    <property type="entry name" value="LIPOXYGENASE_3"/>
    <property type="match status" value="1"/>
</dbReference>
<reference key="1">
    <citation type="journal article" date="2001" name="DNA Res.">
        <title>Complete genomic sequence of the filamentous nitrogen-fixing cyanobacterium Anabaena sp. strain PCC 7120.</title>
        <authorList>
            <person name="Kaneko T."/>
            <person name="Nakamura Y."/>
            <person name="Wolk C.P."/>
            <person name="Kuritz T."/>
            <person name="Sasamoto S."/>
            <person name="Watanabe A."/>
            <person name="Iriguchi M."/>
            <person name="Ishikawa A."/>
            <person name="Kawashima K."/>
            <person name="Kimura T."/>
            <person name="Kishida Y."/>
            <person name="Kohara M."/>
            <person name="Matsumoto M."/>
            <person name="Matsuno A."/>
            <person name="Muraki A."/>
            <person name="Nakazaki N."/>
            <person name="Shimpo S."/>
            <person name="Sugimoto M."/>
            <person name="Takazawa M."/>
            <person name="Yamada M."/>
            <person name="Yasuda M."/>
            <person name="Tabata S."/>
        </authorList>
    </citation>
    <scope>NUCLEOTIDE SEQUENCE [LARGE SCALE GENOMIC DNA]</scope>
    <source>
        <strain>PCC 7120 / SAG 25.82 / UTEX 2576</strain>
    </source>
</reference>
<reference key="2">
    <citation type="journal article" date="2008" name="Biochem. J.">
        <title>A lipoxygenase with linoleate diol synthase activity from Nostoc sp. PCC 7120.</title>
        <authorList>
            <person name="Lang I."/>
            <person name="Gobel C."/>
            <person name="Porzel A."/>
            <person name="Heilmann I."/>
            <person name="Feussner I."/>
        </authorList>
    </citation>
    <scope>FUNCTION</scope>
    <scope>CATALYTIC ACTIVITY</scope>
    <scope>PATHWAY</scope>
    <scope>BIOPHYSICOCHEMICAL PROPERTIES</scope>
    <source>
        <strain>PCC 7120 / SAG 25.82 / UTEX 2576</strain>
    </source>
</reference>
<sequence>MDLNTYLKLLNLLDSESQKIMLELQAMFSAAGLALRGRGTHTDGIIVKGNLTVLHSSDVPSHSLFTPGKKYDVIFRHANIVGGAKDDALINGRGSAIRIGNIGDDLSKPRLLDLVLNTGEVFGLPTARLYHQFFGSDFHQKSDMLASGSLRRYAVEAALRNPDSFTELYYHTQLCYEWVDSKKKSRYARFRLLNPNQSTEGGLLDDSVEIGPRLVLPRKRGDTREKNYLRNEFRQRLTDGNIVEYVLQAQFRSIEDVAVDCSNIWDPNTYPWLDIAAIVLNQDESENDYYQEIAYNPGNTHYDLKLPNSYSVDDFASLGVSGALVHYFGSIVRAERTQYLYGSKDDLPGKPVYFPLPVTEIPSKRFLFLLEKYNFLTDNSYPSDGEHDKIEALVSAMPTTALDLAVGTTDPTDIPDSYFLERRLNGYNPGAIRESSGQEGWTHELTHNLAKYDIKPGLHFPDFVQCRLFVDKQNGVKLHSIKIDDHEITPCQEQWQYAKRTYLQAEFLSQELKLHLARCHFNIEQYVMAIKRRLAPTHPVRAFINPHLEGLIFINSSAVPKIIGSTGFIPIASMLTQGSIVDVMKNELSKLSYMWNPIADLPRDIPGDLFTPAATAYWELLNNYVEQGLLQPFEDELRTEVNAIQVDELFAELKERSLYSGDQPPKYDSSELKSLLMYIIYHSSFLHSWANFKQYDDAGNPNHVSMGDYSQYDQQTQDKIRFSQRSLTWVLSSIRYNSVAVYGSDLLKQLIREKSSILEPGLPLEDLMMSINI</sequence>
<keyword id="KW-0275">Fatty acid biosynthesis</keyword>
<keyword id="KW-0276">Fatty acid metabolism</keyword>
<keyword id="KW-0408">Iron</keyword>
<keyword id="KW-0444">Lipid biosynthesis</keyword>
<keyword id="KW-0443">Lipid metabolism</keyword>
<keyword id="KW-0479">Metal-binding</keyword>
<keyword id="KW-0560">Oxidoreductase</keyword>
<keyword id="KW-0925">Oxylipin biosynthesis</keyword>
<keyword id="KW-0614">Plasmid</keyword>
<keyword id="KW-1185">Reference proteome</keyword>
<geneLocation type="plasmid">
    <name>pCC7120gamma</name>
</geneLocation>
<feature type="chain" id="PRO_0000418759" description="Linolenate 9R-lipoxygenase">
    <location>
        <begin position="1"/>
        <end position="773"/>
    </location>
</feature>
<feature type="domain" description="Lipoxygenase" evidence="1">
    <location>
        <begin position="176"/>
        <end position="773"/>
    </location>
</feature>
<feature type="binding site" evidence="1">
    <location>
        <position position="515"/>
    </location>
    <ligand>
        <name>Fe cation</name>
        <dbReference type="ChEBI" id="CHEBI:24875"/>
        <note>catalytic</note>
    </ligand>
</feature>
<feature type="binding site" evidence="1">
    <location>
        <position position="520"/>
    </location>
    <ligand>
        <name>Fe cation</name>
        <dbReference type="ChEBI" id="CHEBI:24875"/>
        <note>catalytic</note>
    </ligand>
</feature>
<feature type="binding site" evidence="1">
    <location>
        <position position="773"/>
    </location>
    <ligand>
        <name>Fe cation</name>
        <dbReference type="ChEBI" id="CHEBI:24875"/>
        <note>catalytic</note>
    </ligand>
</feature>
<name>LILIP_NOSS1</name>